<proteinExistence type="inferred from homology"/>
<accession>Q756Z0</accession>
<evidence type="ECO:0000250" key="1"/>
<evidence type="ECO:0000255" key="2"/>
<evidence type="ECO:0000255" key="3">
    <source>
        <dbReference type="PROSITE-ProRule" id="PRU01161"/>
    </source>
</evidence>
<evidence type="ECO:0000256" key="4">
    <source>
        <dbReference type="SAM" id="MobiDB-lite"/>
    </source>
</evidence>
<evidence type="ECO:0000305" key="5"/>
<feature type="chain" id="PRO_0000295308" description="Lysophospholipase NTE1">
    <location>
        <begin position="1"/>
        <end position="1522"/>
    </location>
</feature>
<feature type="topological domain" description="Lumenal" evidence="1">
    <location>
        <begin position="1"/>
        <end position="73"/>
    </location>
</feature>
<feature type="transmembrane region" description="Helical" evidence="2">
    <location>
        <begin position="74"/>
        <end position="94"/>
    </location>
</feature>
<feature type="topological domain" description="Cytoplasmic" evidence="1">
    <location>
        <begin position="95"/>
        <end position="1522"/>
    </location>
</feature>
<feature type="domain" description="PNPLA" evidence="3">
    <location>
        <begin position="1219"/>
        <end position="1383"/>
    </location>
</feature>
<feature type="region of interest" description="Disordered" evidence="4">
    <location>
        <begin position="443"/>
        <end position="468"/>
    </location>
</feature>
<feature type="region of interest" description="Disordered" evidence="4">
    <location>
        <begin position="485"/>
        <end position="523"/>
    </location>
</feature>
<feature type="region of interest" description="Disordered" evidence="4">
    <location>
        <begin position="535"/>
        <end position="556"/>
    </location>
</feature>
<feature type="region of interest" description="Disordered" evidence="4">
    <location>
        <begin position="828"/>
        <end position="852"/>
    </location>
</feature>
<feature type="region of interest" description="Disordered" evidence="4">
    <location>
        <begin position="1125"/>
        <end position="1145"/>
    </location>
</feature>
<feature type="short sequence motif" description="GXGXXG" evidence="3">
    <location>
        <begin position="1223"/>
        <end position="1228"/>
    </location>
</feature>
<feature type="short sequence motif" description="GXSXG" evidence="3">
    <location>
        <begin position="1250"/>
        <end position="1254"/>
    </location>
</feature>
<feature type="short sequence motif" description="DGA/G" evidence="3">
    <location>
        <begin position="1370"/>
        <end position="1372"/>
    </location>
</feature>
<feature type="compositionally biased region" description="Low complexity" evidence="4">
    <location>
        <begin position="498"/>
        <end position="511"/>
    </location>
</feature>
<feature type="compositionally biased region" description="Low complexity" evidence="4">
    <location>
        <begin position="540"/>
        <end position="555"/>
    </location>
</feature>
<feature type="active site" description="Nucleophile" evidence="3">
    <location>
        <position position="1252"/>
    </location>
</feature>
<feature type="active site" description="Proton acceptor" evidence="3">
    <location>
        <position position="1370"/>
    </location>
</feature>
<feature type="binding site">
    <location>
        <begin position="661"/>
        <end position="782"/>
    </location>
    <ligand>
        <name>a nucleoside 3',5'-cyclic phosphate</name>
        <dbReference type="ChEBI" id="CHEBI:58464"/>
        <label>1</label>
    </ligand>
</feature>
<feature type="binding site">
    <location>
        <begin position="778"/>
        <end position="918"/>
    </location>
    <ligand>
        <name>a nucleoside 3',5'-cyclic phosphate</name>
        <dbReference type="ChEBI" id="CHEBI:58464"/>
        <label>2</label>
    </ligand>
</feature>
<comment type="function">
    <text evidence="1">Intracellular phospholipase B that catalyzes the double deacylation of phosphatidylcholine (PC) to glycerophosphocholine (GroPCho). Plays an important role in membrane lipid homeostasis. Responsible for the rapid PC turnover in response to inositol, elevated temperatures, or when choline is present in the growth medium (By similarity).</text>
</comment>
<comment type="catalytic activity">
    <reaction>
        <text>a 1-acyl-sn-glycero-3-phosphocholine + H2O = sn-glycerol 3-phosphocholine + a fatty acid + H(+)</text>
        <dbReference type="Rhea" id="RHEA:15177"/>
        <dbReference type="ChEBI" id="CHEBI:15377"/>
        <dbReference type="ChEBI" id="CHEBI:15378"/>
        <dbReference type="ChEBI" id="CHEBI:16870"/>
        <dbReference type="ChEBI" id="CHEBI:28868"/>
        <dbReference type="ChEBI" id="CHEBI:58168"/>
        <dbReference type="EC" id="3.1.1.5"/>
    </reaction>
</comment>
<comment type="activity regulation">
    <text evidence="1">Inhibited by organophosphorus esters.</text>
</comment>
<comment type="subcellular location">
    <subcellularLocation>
        <location evidence="5">Endoplasmic reticulum membrane</location>
        <topology evidence="5">Single-pass type I membrane protein</topology>
    </subcellularLocation>
</comment>
<comment type="similarity">
    <text evidence="5">Belongs to the NTE family.</text>
</comment>
<keyword id="KW-0256">Endoplasmic reticulum</keyword>
<keyword id="KW-0378">Hydrolase</keyword>
<keyword id="KW-0442">Lipid degradation</keyword>
<keyword id="KW-0443">Lipid metabolism</keyword>
<keyword id="KW-0472">Membrane</keyword>
<keyword id="KW-1185">Reference proteome</keyword>
<keyword id="KW-0677">Repeat</keyword>
<keyword id="KW-0812">Transmembrane</keyword>
<keyword id="KW-1133">Transmembrane helix</keyword>
<sequence>MVDGTYVNSSVEAISGEADTAAVAELANQMVMNFLYESSSWLAQSTGPFLWKGFRFLFLRLPSSLLVYLINGTVPFYLVVLGSVFTPIIVYLILRSRVLSAYSRLKGDNEDEVIDKKKQLVNDSEAMLMGGPDGKRRSGFSSYLDEFLSAIKIFGYLDKLVFHELTKSMRTQRLEQGEVMLLDDSVGFAIVVEGGLHIYHKIAHSQGSTRESMPLPEDRSFDSNEDDLTINGERFQLLNKVKAGNPVSSLVSILKLFTDNHTPTVVDSSKSSPKQSAQVPIRQLISPFLDGNVERNKATLNMKQVPTAEYEIPSAERAGSNVSSFTQQLYESMLPKDHAAEDVREPLPEIVAYAASDCAIAVIPASSFKRLMVKYPRSASQIIQVILTKLYRVTFQTAHSYLGLTKEIMHTEVVLNNSTNFELPYYLQEAILRKIKNGSKESSVQESIHRATLRSKNVHAHNSPTPNKISRHIALESRDQYNPGDLLSNVPLSRKGSKTASSSSVSIPRISSLRHQKEAASSPLATLRRLEGNDSQNFAPLSSSSPMSVSEKPSVVGGGAHDNISQISFSSALEETEESSWRMALVESMFGYLGITNESIMPPTEDLLFLNNRASSGSSVCSVSSYSHPQTINQDLFRCLSPELVRTKKKAPRQKYTEEMPINVDFNTAKEEFAEGLETLFIPSGATIVEQNGNNKGLYYIVSGELLVCWKNEEDNIEYVLYTVKPGGIAGYLASLIGFKSFVSLRAKTDLYVGFLPIEVLERLCDKYFMIYLKIAETLTKLLSPKILKLDYALEWIHLEASETLFNQNDPANAIYVVLNGRLRQLHQKSKNEERLSRPTTQRKKRKDDNQPNVQVVGEYSQGCSFGEVEVLTAMNRVSTVVAVRDTELARIPRTLFEVLALEHPSIMIRVSRLVAHKILQRSSDIREPTKIVNSANGYRYDFNLTIPPSAGTSSWGNNSDGGSISYKTITILPITYGLPVEEFANKLVSTFRQVGRSTIGLTQCTTLKHLGRHAFDKLANLKQSGYFAELEELYELVVYIADTPVKSSWTSTCISQGDCILLLADASSDPEIGEFERLLINNRTTARTELLLLHPERYVEPGLTHKWLRKRTWVHQHHHMQFVSSQNPSERVDSKAPPIPGAPPNLIGRLKKRERLNQLTKRTQENFARLLPDSIKLTVENISMKYIQKKQKYYTPVSAHKNDFLRLARILSGQAIGLVLGGGGARGISHLGILKAIEEHGIPIDMIGGTSIGSFVGGLYAKDYDLVPTYGRVKKFAGRIGSIWRMLSDLTWPVTSYTTGHEFNRGIWKAFGDIRIEDFWIQYYCNSTNITESMQEIHTFGYAWRYVRASMSLAGILPPITDNGNMLLDGGYLDNLPVLEMKARGCKTIFAVDVGSVDDRTPMDYGDSLNGFWIVLNRWNPFSKHPNVPSMAEIQMRLGYVASVNALEKAKTTQGVVYFRPPIEDYATLDFAKFEEIYQVGTAYGATFLHELEQNGKLPRIPGNEPANGPGIHLLHRRNSI</sequence>
<gene>
    <name type="primary">NTE1</name>
    <name type="ordered locus">AER124W</name>
</gene>
<protein>
    <recommendedName>
        <fullName>Lysophospholipase NTE1</fullName>
        <ecNumber>3.1.1.5</ecNumber>
    </recommendedName>
    <alternativeName>
        <fullName>Intracellular phospholipase B</fullName>
    </alternativeName>
    <alternativeName>
        <fullName>Neuropathy target esterase homolog</fullName>
    </alternativeName>
</protein>
<reference key="1">
    <citation type="journal article" date="2004" name="Science">
        <title>The Ashbya gossypii genome as a tool for mapping the ancient Saccharomyces cerevisiae genome.</title>
        <authorList>
            <person name="Dietrich F.S."/>
            <person name="Voegeli S."/>
            <person name="Brachat S."/>
            <person name="Lerch A."/>
            <person name="Gates K."/>
            <person name="Steiner S."/>
            <person name="Mohr C."/>
            <person name="Poehlmann R."/>
            <person name="Luedi P."/>
            <person name="Choi S."/>
            <person name="Wing R.A."/>
            <person name="Flavier A."/>
            <person name="Gaffney T.D."/>
            <person name="Philippsen P."/>
        </authorList>
    </citation>
    <scope>NUCLEOTIDE SEQUENCE [LARGE SCALE GENOMIC DNA]</scope>
    <source>
        <strain>ATCC 10895 / CBS 109.51 / FGSC 9923 / NRRL Y-1056</strain>
    </source>
</reference>
<reference key="2">
    <citation type="journal article" date="2013" name="G3 (Bethesda)">
        <title>Genomes of Ashbya fungi isolated from insects reveal four mating-type loci, numerous translocations, lack of transposons, and distinct gene duplications.</title>
        <authorList>
            <person name="Dietrich F.S."/>
            <person name="Voegeli S."/>
            <person name="Kuo S."/>
            <person name="Philippsen P."/>
        </authorList>
    </citation>
    <scope>GENOME REANNOTATION</scope>
    <source>
        <strain>ATCC 10895 / CBS 109.51 / FGSC 9923 / NRRL Y-1056</strain>
    </source>
</reference>
<dbReference type="EC" id="3.1.1.5"/>
<dbReference type="EMBL" id="AE016818">
    <property type="protein sequence ID" value="AAS52807.1"/>
    <property type="molecule type" value="Genomic_DNA"/>
</dbReference>
<dbReference type="RefSeq" id="NP_984983.1">
    <property type="nucleotide sequence ID" value="NM_210337.1"/>
</dbReference>
<dbReference type="SMR" id="Q756Z0"/>
<dbReference type="FunCoup" id="Q756Z0">
    <property type="interactions" value="133"/>
</dbReference>
<dbReference type="STRING" id="284811.Q756Z0"/>
<dbReference type="EnsemblFungi" id="AAS52807">
    <property type="protein sequence ID" value="AAS52807"/>
    <property type="gene ID" value="AGOS_AER124W"/>
</dbReference>
<dbReference type="GeneID" id="4621189"/>
<dbReference type="KEGG" id="ago:AGOS_AER124W"/>
<dbReference type="eggNOG" id="KOG2968">
    <property type="taxonomic scope" value="Eukaryota"/>
</dbReference>
<dbReference type="HOGENOM" id="CLU_000960_1_1_1"/>
<dbReference type="InParanoid" id="Q756Z0"/>
<dbReference type="OMA" id="SSGYVWR"/>
<dbReference type="OrthoDB" id="421051at2759"/>
<dbReference type="Proteomes" id="UP000000591">
    <property type="component" value="Chromosome V"/>
</dbReference>
<dbReference type="GO" id="GO:0005783">
    <property type="term" value="C:endoplasmic reticulum"/>
    <property type="evidence" value="ECO:0000318"/>
    <property type="project" value="GO_Central"/>
</dbReference>
<dbReference type="GO" id="GO:0005789">
    <property type="term" value="C:endoplasmic reticulum membrane"/>
    <property type="evidence" value="ECO:0007669"/>
    <property type="project" value="UniProtKB-SubCell"/>
</dbReference>
<dbReference type="GO" id="GO:0004622">
    <property type="term" value="F:lysophospholipase activity"/>
    <property type="evidence" value="ECO:0000318"/>
    <property type="project" value="GO_Central"/>
</dbReference>
<dbReference type="GO" id="GO:0034638">
    <property type="term" value="P:phosphatidylcholine catabolic process"/>
    <property type="evidence" value="ECO:0007669"/>
    <property type="project" value="EnsemblFungi"/>
</dbReference>
<dbReference type="GO" id="GO:0071071">
    <property type="term" value="P:regulation of phospholipid biosynthetic process"/>
    <property type="evidence" value="ECO:0007669"/>
    <property type="project" value="EnsemblFungi"/>
</dbReference>
<dbReference type="CDD" id="cd00038">
    <property type="entry name" value="CAP_ED"/>
    <property type="match status" value="2"/>
</dbReference>
<dbReference type="FunFam" id="2.60.120.10:FF:000193">
    <property type="entry name" value="Lysophospholipase NTE1"/>
    <property type="match status" value="1"/>
</dbReference>
<dbReference type="FunFam" id="2.60.120.10:FF:000245">
    <property type="entry name" value="Lysophospholipase NTE1"/>
    <property type="match status" value="1"/>
</dbReference>
<dbReference type="FunFam" id="3.40.1090.10:FF:000007">
    <property type="entry name" value="Lysophospholipase NTE1"/>
    <property type="match status" value="1"/>
</dbReference>
<dbReference type="FunFam" id="3.40.1090.10:FF:000013">
    <property type="entry name" value="Lysophospholipase NTE1"/>
    <property type="match status" value="1"/>
</dbReference>
<dbReference type="Gene3D" id="3.40.1090.10">
    <property type="entry name" value="Cytosolic phospholipase A2 catalytic domain"/>
    <property type="match status" value="2"/>
</dbReference>
<dbReference type="Gene3D" id="2.60.120.10">
    <property type="entry name" value="Jelly Rolls"/>
    <property type="match status" value="3"/>
</dbReference>
<dbReference type="InterPro" id="IPR016035">
    <property type="entry name" value="Acyl_Trfase/lysoPLipase"/>
</dbReference>
<dbReference type="InterPro" id="IPR000595">
    <property type="entry name" value="cNMP-bd_dom"/>
</dbReference>
<dbReference type="InterPro" id="IPR018490">
    <property type="entry name" value="cNMP-bd_dom_sf"/>
</dbReference>
<dbReference type="InterPro" id="IPR001423">
    <property type="entry name" value="LysoPLipase_patatin_CS"/>
</dbReference>
<dbReference type="InterPro" id="IPR050301">
    <property type="entry name" value="NTE"/>
</dbReference>
<dbReference type="InterPro" id="IPR056556">
    <property type="entry name" value="NTE1_P-loop_dom"/>
</dbReference>
<dbReference type="InterPro" id="IPR002641">
    <property type="entry name" value="PNPLA_dom"/>
</dbReference>
<dbReference type="InterPro" id="IPR014710">
    <property type="entry name" value="RmlC-like_jellyroll"/>
</dbReference>
<dbReference type="PANTHER" id="PTHR14226:SF29">
    <property type="entry name" value="NEUROPATHY TARGET ESTERASE SWS"/>
    <property type="match status" value="1"/>
</dbReference>
<dbReference type="PANTHER" id="PTHR14226">
    <property type="entry name" value="NEUROPATHY TARGET ESTERASE/SWISS CHEESE D.MELANOGASTER"/>
    <property type="match status" value="1"/>
</dbReference>
<dbReference type="Pfam" id="PF00027">
    <property type="entry name" value="cNMP_binding"/>
    <property type="match status" value="2"/>
</dbReference>
<dbReference type="Pfam" id="PF24179">
    <property type="entry name" value="NTE_Ploop"/>
    <property type="match status" value="1"/>
</dbReference>
<dbReference type="Pfam" id="PF01734">
    <property type="entry name" value="Patatin"/>
    <property type="match status" value="1"/>
</dbReference>
<dbReference type="SMART" id="SM00100">
    <property type="entry name" value="cNMP"/>
    <property type="match status" value="2"/>
</dbReference>
<dbReference type="SUPFAM" id="SSF51206">
    <property type="entry name" value="cAMP-binding domain-like"/>
    <property type="match status" value="3"/>
</dbReference>
<dbReference type="SUPFAM" id="SSF52151">
    <property type="entry name" value="FabD/lysophospholipase-like"/>
    <property type="match status" value="1"/>
</dbReference>
<dbReference type="PROSITE" id="PS50042">
    <property type="entry name" value="CNMP_BINDING_3"/>
    <property type="match status" value="2"/>
</dbReference>
<dbReference type="PROSITE" id="PS51635">
    <property type="entry name" value="PNPLA"/>
    <property type="match status" value="1"/>
</dbReference>
<dbReference type="PROSITE" id="PS01237">
    <property type="entry name" value="UPF0028"/>
    <property type="match status" value="1"/>
</dbReference>
<name>NTE1_EREGS</name>
<organism>
    <name type="scientific">Eremothecium gossypii (strain ATCC 10895 / CBS 109.51 / FGSC 9923 / NRRL Y-1056)</name>
    <name type="common">Yeast</name>
    <name type="synonym">Ashbya gossypii</name>
    <dbReference type="NCBI Taxonomy" id="284811"/>
    <lineage>
        <taxon>Eukaryota</taxon>
        <taxon>Fungi</taxon>
        <taxon>Dikarya</taxon>
        <taxon>Ascomycota</taxon>
        <taxon>Saccharomycotina</taxon>
        <taxon>Saccharomycetes</taxon>
        <taxon>Saccharomycetales</taxon>
        <taxon>Saccharomycetaceae</taxon>
        <taxon>Eremothecium</taxon>
    </lineage>
</organism>